<comment type="function">
    <text evidence="1">Positively regulates the expression of the arcABDCR operon under anaerobic conditions, thus playing an essential role in arginine catabolism. May also control the expression of genes encoding proteins which are involved in anaerobic metabolism. Can bind cyclic AMP (By similarity).</text>
</comment>
<comment type="subcellular location">
    <subcellularLocation>
        <location evidence="1">Cytoplasm</location>
    </subcellularLocation>
</comment>
<accession>Q5HKU6</accession>
<sequence>MTGNQMFCRENELDESFKQLASYINIPVGVLLPFKSQCFVRHYNKGQIVYYSSDETTHIYLLLKGNIMRENFNLNGDVYRYLNREKVLFPLNNLFQDKVPNEMCTALTDCEMIGIPRDLIEYLCKNHEEIFVKLFSLLSETQCQHIEYNMALTSKLAKERVTKILRYLCQTVGYDHDEFYEIKHFMTIQLLSDMAGISRETTSHIINELKEEKILFKNSKNWLVSKDL</sequence>
<evidence type="ECO:0000250" key="1"/>
<gene>
    <name type="primary">arcR</name>
    <name type="ordered locus">SERP2246</name>
</gene>
<dbReference type="EMBL" id="CP000029">
    <property type="protein sequence ID" value="AAW53105.1"/>
    <property type="molecule type" value="Genomic_DNA"/>
</dbReference>
<dbReference type="RefSeq" id="WP_002486086.1">
    <property type="nucleotide sequence ID" value="NC_002976.3"/>
</dbReference>
<dbReference type="SMR" id="Q5HKU6"/>
<dbReference type="STRING" id="176279.SERP2246"/>
<dbReference type="KEGG" id="ser:SERP2246"/>
<dbReference type="eggNOG" id="COG0664">
    <property type="taxonomic scope" value="Bacteria"/>
</dbReference>
<dbReference type="HOGENOM" id="CLU_1160528_0_0_9"/>
<dbReference type="Proteomes" id="UP000000531">
    <property type="component" value="Chromosome"/>
</dbReference>
<dbReference type="GO" id="GO:0005737">
    <property type="term" value="C:cytoplasm"/>
    <property type="evidence" value="ECO:0007669"/>
    <property type="project" value="UniProtKB-SubCell"/>
</dbReference>
<dbReference type="GO" id="GO:0030552">
    <property type="term" value="F:cAMP binding"/>
    <property type="evidence" value="ECO:0007669"/>
    <property type="project" value="UniProtKB-KW"/>
</dbReference>
<dbReference type="GO" id="GO:0003677">
    <property type="term" value="F:DNA binding"/>
    <property type="evidence" value="ECO:0007669"/>
    <property type="project" value="UniProtKB-KW"/>
</dbReference>
<dbReference type="GO" id="GO:0006355">
    <property type="term" value="P:regulation of DNA-templated transcription"/>
    <property type="evidence" value="ECO:0007669"/>
    <property type="project" value="InterPro"/>
</dbReference>
<dbReference type="CDD" id="cd00038">
    <property type="entry name" value="CAP_ED"/>
    <property type="match status" value="1"/>
</dbReference>
<dbReference type="Gene3D" id="2.60.120.10">
    <property type="entry name" value="Jelly Rolls"/>
    <property type="match status" value="1"/>
</dbReference>
<dbReference type="Gene3D" id="1.10.10.10">
    <property type="entry name" value="Winged helix-like DNA-binding domain superfamily/Winged helix DNA-binding domain"/>
    <property type="match status" value="1"/>
</dbReference>
<dbReference type="InterPro" id="IPR000595">
    <property type="entry name" value="cNMP-bd_dom"/>
</dbReference>
<dbReference type="InterPro" id="IPR018490">
    <property type="entry name" value="cNMP-bd_dom_sf"/>
</dbReference>
<dbReference type="InterPro" id="IPR012318">
    <property type="entry name" value="HTH_CRP"/>
</dbReference>
<dbReference type="InterPro" id="IPR014710">
    <property type="entry name" value="RmlC-like_jellyroll"/>
</dbReference>
<dbReference type="InterPro" id="IPR036388">
    <property type="entry name" value="WH-like_DNA-bd_sf"/>
</dbReference>
<dbReference type="InterPro" id="IPR036390">
    <property type="entry name" value="WH_DNA-bd_sf"/>
</dbReference>
<dbReference type="Pfam" id="PF00027">
    <property type="entry name" value="cNMP_binding"/>
    <property type="match status" value="1"/>
</dbReference>
<dbReference type="Pfam" id="PF13545">
    <property type="entry name" value="HTH_Crp_2"/>
    <property type="match status" value="1"/>
</dbReference>
<dbReference type="SUPFAM" id="SSF51206">
    <property type="entry name" value="cAMP-binding domain-like"/>
    <property type="match status" value="1"/>
</dbReference>
<dbReference type="SUPFAM" id="SSF46785">
    <property type="entry name" value="Winged helix' DNA-binding domain"/>
    <property type="match status" value="1"/>
</dbReference>
<protein>
    <recommendedName>
        <fullName>HTH-type transcriptional regulator ArcR</fullName>
    </recommendedName>
</protein>
<proteinExistence type="inferred from homology"/>
<keyword id="KW-0010">Activator</keyword>
<keyword id="KW-0114">cAMP</keyword>
<keyword id="KW-0116">cAMP-binding</keyword>
<keyword id="KW-0963">Cytoplasm</keyword>
<keyword id="KW-0238">DNA-binding</keyword>
<keyword id="KW-0547">Nucleotide-binding</keyword>
<keyword id="KW-1185">Reference proteome</keyword>
<keyword id="KW-0804">Transcription</keyword>
<keyword id="KW-0805">Transcription regulation</keyword>
<feature type="chain" id="PRO_0000349419" description="HTH-type transcriptional regulator ArcR">
    <location>
        <begin position="1"/>
        <end position="228"/>
    </location>
</feature>
<feature type="domain" description="HTH crp-type">
    <location>
        <begin position="155"/>
        <end position="228"/>
    </location>
</feature>
<feature type="DNA-binding region" description="H-T-H motif" evidence="1">
    <location>
        <begin position="188"/>
        <end position="207"/>
    </location>
</feature>
<feature type="binding site">
    <location>
        <begin position="22"/>
        <end position="141"/>
    </location>
    <ligand>
        <name>a nucleoside 3',5'-cyclic phosphate</name>
        <dbReference type="ChEBI" id="CHEBI:58464"/>
    </ligand>
</feature>
<reference key="1">
    <citation type="journal article" date="2005" name="J. Bacteriol.">
        <title>Insights on evolution of virulence and resistance from the complete genome analysis of an early methicillin-resistant Staphylococcus aureus strain and a biofilm-producing methicillin-resistant Staphylococcus epidermidis strain.</title>
        <authorList>
            <person name="Gill S.R."/>
            <person name="Fouts D.E."/>
            <person name="Archer G.L."/>
            <person name="Mongodin E.F."/>
            <person name="DeBoy R.T."/>
            <person name="Ravel J."/>
            <person name="Paulsen I.T."/>
            <person name="Kolonay J.F."/>
            <person name="Brinkac L.M."/>
            <person name="Beanan M.J."/>
            <person name="Dodson R.J."/>
            <person name="Daugherty S.C."/>
            <person name="Madupu R."/>
            <person name="Angiuoli S.V."/>
            <person name="Durkin A.S."/>
            <person name="Haft D.H."/>
            <person name="Vamathevan J.J."/>
            <person name="Khouri H."/>
            <person name="Utterback T.R."/>
            <person name="Lee C."/>
            <person name="Dimitrov G."/>
            <person name="Jiang L."/>
            <person name="Qin H."/>
            <person name="Weidman J."/>
            <person name="Tran K."/>
            <person name="Kang K.H."/>
            <person name="Hance I.R."/>
            <person name="Nelson K.E."/>
            <person name="Fraser C.M."/>
        </authorList>
    </citation>
    <scope>NUCLEOTIDE SEQUENCE [LARGE SCALE GENOMIC DNA]</scope>
    <source>
        <strain>ATCC 35984 / DSM 28319 / BCRC 17069 / CCUG 31568 / BM 3577 / RP62A</strain>
    </source>
</reference>
<name>ARCR_STAEQ</name>
<organism>
    <name type="scientific">Staphylococcus epidermidis (strain ATCC 35984 / DSM 28319 / BCRC 17069 / CCUG 31568 / BM 3577 / RP62A)</name>
    <dbReference type="NCBI Taxonomy" id="176279"/>
    <lineage>
        <taxon>Bacteria</taxon>
        <taxon>Bacillati</taxon>
        <taxon>Bacillota</taxon>
        <taxon>Bacilli</taxon>
        <taxon>Bacillales</taxon>
        <taxon>Staphylococcaceae</taxon>
        <taxon>Staphylococcus</taxon>
    </lineage>
</organism>